<accession>Q54JH4</accession>
<feature type="chain" id="PRO_0000390415" description="P2X receptor E">
    <location>
        <begin position="1"/>
        <end position="388"/>
    </location>
</feature>
<feature type="topological domain" description="Cytoplasmic" evidence="1">
    <location>
        <begin position="1"/>
        <end position="28"/>
    </location>
</feature>
<feature type="transmembrane region" description="Helical" evidence="1">
    <location>
        <begin position="29"/>
        <end position="49"/>
    </location>
</feature>
<feature type="topological domain" description="Lumenal" evidence="1">
    <location>
        <begin position="50"/>
        <end position="312"/>
    </location>
</feature>
<feature type="transmembrane region" description="Helical" evidence="1">
    <location>
        <begin position="313"/>
        <end position="333"/>
    </location>
</feature>
<feature type="topological domain" description="Cytoplasmic" evidence="1">
    <location>
        <begin position="334"/>
        <end position="388"/>
    </location>
</feature>
<feature type="region of interest" description="Pore-forming motif" evidence="1">
    <location>
        <begin position="291"/>
        <end position="304"/>
    </location>
</feature>
<feature type="region of interest" description="Disordered" evidence="2">
    <location>
        <begin position="349"/>
        <end position="388"/>
    </location>
</feature>
<feature type="compositionally biased region" description="Polar residues" evidence="2">
    <location>
        <begin position="350"/>
        <end position="365"/>
    </location>
</feature>
<feature type="compositionally biased region" description="Polar residues" evidence="2">
    <location>
        <begin position="377"/>
        <end position="388"/>
    </location>
</feature>
<proteinExistence type="inferred from homology"/>
<keyword id="KW-0407">Ion channel</keyword>
<keyword id="KW-0406">Ion transport</keyword>
<keyword id="KW-1071">Ligand-gated ion channel</keyword>
<keyword id="KW-0472">Membrane</keyword>
<keyword id="KW-0675">Receptor</keyword>
<keyword id="KW-1185">Reference proteome</keyword>
<keyword id="KW-0812">Transmembrane</keyword>
<keyword id="KW-1133">Transmembrane helix</keyword>
<keyword id="KW-0813">Transport</keyword>
<keyword id="KW-0926">Vacuole</keyword>
<comment type="function">
    <text evidence="3 4">P2X receptors are ATP-gated ion channels that play a role in intracellular calcium signaling. Not required for the purinergic response to extracellular nucleotides. Not essential for osmoregulation. Inward currents evoked by intracellular ATP. ATP analog beta, gamma-imido-ATP is a weak partial agonist of p2xE. Exclusively selective for ATP over other nucleotides. Insensitive to copper and P2 receptor antagonists PPADS and suramin but strongly inhibited by sodium ions. More permeable to ammonium than either sodium or potassium ions and less permeable to choline. Permeable to calcium ions, but not chloride.</text>
</comment>
<comment type="subcellular location">
    <subcellularLocation>
        <location evidence="4">Contractile vacuole membrane</location>
    </subcellularLocation>
    <text>Ligand binding domain within the lumen of the vacuole.</text>
</comment>
<comment type="disruption phenotype">
    <text evidence="3 4">Response to extracellular ATP remains the same in p2xE null strains. Null cells are still capable of osmoregulation and do not show any noticeable differences in their sensitivity to hypotonic conditions. Quintuple p2xA/p2xB/p2xC/p2xD/p2xE null cells displayed slight delay in their osmoregulatory response, but are still capable of regulating their cell volume in water. Extracellular purinergic response to ATP persists in the quintuple null cells with no alteration in the kinetics of the response, but the magnitude of the response is lower. Responses to the calmodulin antagonist calmidazolium are reduced and intracellular calcium signaling is disrupted in quintuple null cells. The presence of copper prevented both wild type and quintuple null cells from undergoing an osmoregulatory decrease in cell volume. No obvious morphological phenotype was apparent in the p2xE or quintuple p2x null strains. The quintuple p2x null strains grow slightly slower than wild type in shaking axenic cultures.</text>
</comment>
<comment type="similarity">
    <text evidence="5">Belongs to the P2X receptor family.</text>
</comment>
<name>P2XE_DICDI</name>
<protein>
    <recommendedName>
        <fullName>P2X receptor E</fullName>
        <shortName>P2XE</shortName>
    </recommendedName>
</protein>
<reference key="1">
    <citation type="journal article" date="2005" name="Nature">
        <title>The genome of the social amoeba Dictyostelium discoideum.</title>
        <authorList>
            <person name="Eichinger L."/>
            <person name="Pachebat J.A."/>
            <person name="Gloeckner G."/>
            <person name="Rajandream M.A."/>
            <person name="Sucgang R."/>
            <person name="Berriman M."/>
            <person name="Song J."/>
            <person name="Olsen R."/>
            <person name="Szafranski K."/>
            <person name="Xu Q."/>
            <person name="Tunggal B."/>
            <person name="Kummerfeld S."/>
            <person name="Madera M."/>
            <person name="Konfortov B.A."/>
            <person name="Rivero F."/>
            <person name="Bankier A.T."/>
            <person name="Lehmann R."/>
            <person name="Hamlin N."/>
            <person name="Davies R."/>
            <person name="Gaudet P."/>
            <person name="Fey P."/>
            <person name="Pilcher K."/>
            <person name="Chen G."/>
            <person name="Saunders D."/>
            <person name="Sodergren E.J."/>
            <person name="Davis P."/>
            <person name="Kerhornou A."/>
            <person name="Nie X."/>
            <person name="Hall N."/>
            <person name="Anjard C."/>
            <person name="Hemphill L."/>
            <person name="Bason N."/>
            <person name="Farbrother P."/>
            <person name="Desany B."/>
            <person name="Just E."/>
            <person name="Morio T."/>
            <person name="Rost R."/>
            <person name="Churcher C.M."/>
            <person name="Cooper J."/>
            <person name="Haydock S."/>
            <person name="van Driessche N."/>
            <person name="Cronin A."/>
            <person name="Goodhead I."/>
            <person name="Muzny D.M."/>
            <person name="Mourier T."/>
            <person name="Pain A."/>
            <person name="Lu M."/>
            <person name="Harper D."/>
            <person name="Lindsay R."/>
            <person name="Hauser H."/>
            <person name="James K.D."/>
            <person name="Quiles M."/>
            <person name="Madan Babu M."/>
            <person name="Saito T."/>
            <person name="Buchrieser C."/>
            <person name="Wardroper A."/>
            <person name="Felder M."/>
            <person name="Thangavelu M."/>
            <person name="Johnson D."/>
            <person name="Knights A."/>
            <person name="Loulseged H."/>
            <person name="Mungall K.L."/>
            <person name="Oliver K."/>
            <person name="Price C."/>
            <person name="Quail M.A."/>
            <person name="Urushihara H."/>
            <person name="Hernandez J."/>
            <person name="Rabbinowitsch E."/>
            <person name="Steffen D."/>
            <person name="Sanders M."/>
            <person name="Ma J."/>
            <person name="Kohara Y."/>
            <person name="Sharp S."/>
            <person name="Simmonds M.N."/>
            <person name="Spiegler S."/>
            <person name="Tivey A."/>
            <person name="Sugano S."/>
            <person name="White B."/>
            <person name="Walker D."/>
            <person name="Woodward J.R."/>
            <person name="Winckler T."/>
            <person name="Tanaka Y."/>
            <person name="Shaulsky G."/>
            <person name="Schleicher M."/>
            <person name="Weinstock G.M."/>
            <person name="Rosenthal A."/>
            <person name="Cox E.C."/>
            <person name="Chisholm R.L."/>
            <person name="Gibbs R.A."/>
            <person name="Loomis W.F."/>
            <person name="Platzer M."/>
            <person name="Kay R.R."/>
            <person name="Williams J.G."/>
            <person name="Dear P.H."/>
            <person name="Noegel A.A."/>
            <person name="Barrell B.G."/>
            <person name="Kuspa A."/>
        </authorList>
    </citation>
    <scope>NUCLEOTIDE SEQUENCE [LARGE SCALE GENOMIC DNA]</scope>
    <source>
        <strain>AX4</strain>
    </source>
</reference>
<reference key="2">
    <citation type="journal article" date="2008" name="Cell Calcium">
        <title>Purinergic-mediated Ca2+ influx in Dictyostelium discoideum.</title>
        <authorList>
            <person name="Ludlow M.J."/>
            <person name="Traynor D."/>
            <person name="Fisher P.R."/>
            <person name="Ennion S.J."/>
        </authorList>
    </citation>
    <scope>FUNCTION</scope>
    <scope>DISRUPTION PHENOTYPE</scope>
</reference>
<reference key="3">
    <citation type="journal article" date="2009" name="J. Biol. Chem.">
        <title>Functional characterization of intracellular Dictyostelium discoideum P2X receptors.</title>
        <authorList>
            <person name="Ludlow M.J."/>
            <person name="Durai L."/>
            <person name="Ennion S.J."/>
        </authorList>
    </citation>
    <scope>FUNCTION</scope>
    <scope>SUBCELLULAR LOCATION</scope>
    <scope>DISRUPTION PHENOTYPE</scope>
</reference>
<gene>
    <name type="primary">p2xE</name>
    <name type="ORF">DDB_G0288061</name>
</gene>
<organism>
    <name type="scientific">Dictyostelium discoideum</name>
    <name type="common">Social amoeba</name>
    <dbReference type="NCBI Taxonomy" id="44689"/>
    <lineage>
        <taxon>Eukaryota</taxon>
        <taxon>Amoebozoa</taxon>
        <taxon>Evosea</taxon>
        <taxon>Eumycetozoa</taxon>
        <taxon>Dictyostelia</taxon>
        <taxon>Dictyosteliales</taxon>
        <taxon>Dictyosteliaceae</taxon>
        <taxon>Dictyostelium</taxon>
    </lineage>
</organism>
<sequence length="388" mass="43829">MNFRNIDWDSLFSYSTIKIVRIRDKRLGILHFAFLIGIILYIIVGTIFLQKKYLVLESPIGSIRTSLMAPSVKPTDLPYCLKNGTDTSYDGYPNKPCQYWDEYLVLYPPSEESSMFITTRCTQETQSTVNGCNLSEPTCVYNTTSSSDFYIANVENFTILLDHTLSAPSLGIQYNGAQLNGQLLDTDGNPMSLPPPNIVGVKGSPDIMSLQGVLTAAGVESLDSQGLANKSRTIRDDGILILCFITYSNTYTYNTGNYHYTYQFKLVQNTKYKIVEPVFTKDVEDRYIFDRHGVRIIFIQTGQLGQFDFQTMLLTFVSGIGLVTAASLIVDIIATRIMPQRSRYQELKFQDSSINNTQKTPTNDHTPLLKDNEDTINENSYQNNSYEK</sequence>
<evidence type="ECO:0000255" key="1"/>
<evidence type="ECO:0000256" key="2">
    <source>
        <dbReference type="SAM" id="MobiDB-lite"/>
    </source>
</evidence>
<evidence type="ECO:0000269" key="3">
    <source>
    </source>
</evidence>
<evidence type="ECO:0000269" key="4">
    <source>
    </source>
</evidence>
<evidence type="ECO:0000305" key="5"/>
<dbReference type="EMBL" id="AAFI02000107">
    <property type="protein sequence ID" value="EAL63456.2"/>
    <property type="molecule type" value="Genomic_DNA"/>
</dbReference>
<dbReference type="RefSeq" id="XP_636957.2">
    <property type="nucleotide sequence ID" value="XM_631865.2"/>
</dbReference>
<dbReference type="FunCoup" id="Q54JH4">
    <property type="interactions" value="6"/>
</dbReference>
<dbReference type="STRING" id="44689.Q54JH4"/>
<dbReference type="PaxDb" id="44689-DDB0238352"/>
<dbReference type="EnsemblProtists" id="EAL63456">
    <property type="protein sequence ID" value="EAL63456"/>
    <property type="gene ID" value="DDB_G0288061"/>
</dbReference>
<dbReference type="GeneID" id="8626432"/>
<dbReference type="KEGG" id="ddi:DDB_G0288061"/>
<dbReference type="dictyBase" id="DDB_G0288061">
    <property type="gene designation" value="p2xE"/>
</dbReference>
<dbReference type="VEuPathDB" id="AmoebaDB:DDB_G0288061"/>
<dbReference type="eggNOG" id="ENOG502TBEY">
    <property type="taxonomic scope" value="Eukaryota"/>
</dbReference>
<dbReference type="HOGENOM" id="CLU_060033_0_0_1"/>
<dbReference type="InParanoid" id="Q54JH4"/>
<dbReference type="OMA" id="SMFITTR"/>
<dbReference type="PhylomeDB" id="Q54JH4"/>
<dbReference type="Reactome" id="R-DDI-139853">
    <property type="pathway name" value="Elevation of cytosolic Ca2+ levels"/>
</dbReference>
<dbReference type="Reactome" id="R-DDI-418346">
    <property type="pathway name" value="Platelet homeostasis"/>
</dbReference>
<dbReference type="Reactome" id="R-DDI-6798695">
    <property type="pathway name" value="Neutrophil degranulation"/>
</dbReference>
<dbReference type="Reactome" id="R-DDI-844456">
    <property type="pathway name" value="The NLRP3 inflammasome"/>
</dbReference>
<dbReference type="PRO" id="PR:Q54JH4"/>
<dbReference type="Proteomes" id="UP000002195">
    <property type="component" value="Chromosome 5"/>
</dbReference>
<dbReference type="GO" id="GO:0031164">
    <property type="term" value="C:contractile vacuolar membrane"/>
    <property type="evidence" value="ECO:0000314"/>
    <property type="project" value="dictyBase"/>
</dbReference>
<dbReference type="GO" id="GO:0005524">
    <property type="term" value="F:ATP binding"/>
    <property type="evidence" value="ECO:0000305"/>
    <property type="project" value="dictyBase"/>
</dbReference>
<dbReference type="GO" id="GO:0035381">
    <property type="term" value="F:ATP-gated ion channel activity"/>
    <property type="evidence" value="ECO:0000314"/>
    <property type="project" value="dictyBase"/>
</dbReference>
<dbReference type="GO" id="GO:0140417">
    <property type="term" value="F:intracellularly ATP-gated calcium channel activity"/>
    <property type="evidence" value="ECO:0000316"/>
    <property type="project" value="dictyBase"/>
</dbReference>
<dbReference type="GO" id="GO:0070588">
    <property type="term" value="P:calcium ion transmembrane transport"/>
    <property type="evidence" value="ECO:0000316"/>
    <property type="project" value="dictyBase"/>
</dbReference>
<dbReference type="GO" id="GO:0071476">
    <property type="term" value="P:cellular hypotonic response"/>
    <property type="evidence" value="ECO:0000316"/>
    <property type="project" value="dictyBase"/>
</dbReference>
<dbReference type="GO" id="GO:0006811">
    <property type="term" value="P:monoatomic ion transport"/>
    <property type="evidence" value="ECO:0000314"/>
    <property type="project" value="dictyBase"/>
</dbReference>
<dbReference type="GO" id="GO:0050848">
    <property type="term" value="P:regulation of calcium-mediated signaling"/>
    <property type="evidence" value="ECO:0000316"/>
    <property type="project" value="dictyBase"/>
</dbReference>
<dbReference type="FunFam" id="1.10.287.940:FF:000010">
    <property type="entry name" value="P2X receptor E"/>
    <property type="match status" value="1"/>
</dbReference>
<dbReference type="Gene3D" id="1.10.287.940">
    <property type="entry name" value="atp-gated p2x4 ion channel"/>
    <property type="match status" value="2"/>
</dbReference>
<dbReference type="PANTHER" id="PTHR10125">
    <property type="entry name" value="P2X PURINOCEPTOR"/>
    <property type="match status" value="1"/>
</dbReference>
<dbReference type="PANTHER" id="PTHR10125:SF31">
    <property type="entry name" value="P2X RECEPTOR E"/>
    <property type="match status" value="1"/>
</dbReference>
<dbReference type="Pfam" id="PF00864">
    <property type="entry name" value="P2X_receptor"/>
    <property type="match status" value="2"/>
</dbReference>